<dbReference type="EC" id="7.1.1.-" evidence="1"/>
<dbReference type="EMBL" id="EF614270">
    <property type="protein sequence ID" value="ABQ81503.1"/>
    <property type="molecule type" value="Genomic_DNA"/>
</dbReference>
<dbReference type="RefSeq" id="YP_001542499.1">
    <property type="nucleotide sequence ID" value="NC_009962.1"/>
</dbReference>
<dbReference type="SMR" id="A8SEF7"/>
<dbReference type="GeneID" id="5729487"/>
<dbReference type="GO" id="GO:0009535">
    <property type="term" value="C:chloroplast thylakoid membrane"/>
    <property type="evidence" value="ECO:0007669"/>
    <property type="project" value="UniProtKB-SubCell"/>
</dbReference>
<dbReference type="GO" id="GO:0030964">
    <property type="term" value="C:NADH dehydrogenase complex"/>
    <property type="evidence" value="ECO:0007669"/>
    <property type="project" value="TreeGrafter"/>
</dbReference>
<dbReference type="GO" id="GO:0016655">
    <property type="term" value="F:oxidoreductase activity, acting on NAD(P)H, quinone or similar compound as acceptor"/>
    <property type="evidence" value="ECO:0007669"/>
    <property type="project" value="UniProtKB-UniRule"/>
</dbReference>
<dbReference type="GO" id="GO:0048038">
    <property type="term" value="F:quinone binding"/>
    <property type="evidence" value="ECO:0007669"/>
    <property type="project" value="UniProtKB-KW"/>
</dbReference>
<dbReference type="GO" id="GO:0042773">
    <property type="term" value="P:ATP synthesis coupled electron transport"/>
    <property type="evidence" value="ECO:0007669"/>
    <property type="project" value="InterPro"/>
</dbReference>
<dbReference type="GO" id="GO:0019684">
    <property type="term" value="P:photosynthesis, light reaction"/>
    <property type="evidence" value="ECO:0007669"/>
    <property type="project" value="UniProtKB-UniRule"/>
</dbReference>
<dbReference type="FunFam" id="1.10.287.3510:FF:000001">
    <property type="entry name" value="NADH-quinone oxidoreductase subunit K"/>
    <property type="match status" value="1"/>
</dbReference>
<dbReference type="Gene3D" id="1.10.287.3510">
    <property type="match status" value="1"/>
</dbReference>
<dbReference type="HAMAP" id="MF_01456">
    <property type="entry name" value="NDH1_NuoK"/>
    <property type="match status" value="1"/>
</dbReference>
<dbReference type="InterPro" id="IPR001133">
    <property type="entry name" value="NADH_UbQ_OxRdtase_chain4L/K"/>
</dbReference>
<dbReference type="InterPro" id="IPR039428">
    <property type="entry name" value="NUOK/Mnh_C1-like"/>
</dbReference>
<dbReference type="NCBIfam" id="NF004320">
    <property type="entry name" value="PRK05715.1-2"/>
    <property type="match status" value="1"/>
</dbReference>
<dbReference type="NCBIfam" id="NF004322">
    <property type="entry name" value="PRK05715.1-4"/>
    <property type="match status" value="1"/>
</dbReference>
<dbReference type="PANTHER" id="PTHR11434:SF16">
    <property type="entry name" value="NADH-UBIQUINONE OXIDOREDUCTASE CHAIN 4L"/>
    <property type="match status" value="1"/>
</dbReference>
<dbReference type="PANTHER" id="PTHR11434">
    <property type="entry name" value="NADH-UBIQUINONE OXIDOREDUCTASE SUBUNIT ND4L"/>
    <property type="match status" value="1"/>
</dbReference>
<dbReference type="Pfam" id="PF00420">
    <property type="entry name" value="Oxidored_q2"/>
    <property type="match status" value="1"/>
</dbReference>
<geneLocation type="chloroplast"/>
<proteinExistence type="inferred from homology"/>
<evidence type="ECO:0000255" key="1">
    <source>
        <dbReference type="HAMAP-Rule" id="MF_01456"/>
    </source>
</evidence>
<gene>
    <name evidence="1" type="primary">ndhE</name>
</gene>
<protein>
    <recommendedName>
        <fullName evidence="1">NAD(P)H-quinone oxidoreductase subunit 4L, chloroplastic</fullName>
        <ecNumber evidence="1">7.1.1.-</ecNumber>
    </recommendedName>
    <alternativeName>
        <fullName evidence="1">NAD(P)H dehydrogenase subunit 4L</fullName>
    </alternativeName>
    <alternativeName>
        <fullName evidence="1">NADH-plastoquinone oxidoreductase subunit 4L</fullName>
    </alternativeName>
</protein>
<feature type="chain" id="PRO_0000360313" description="NAD(P)H-quinone oxidoreductase subunit 4L, chloroplastic">
    <location>
        <begin position="1"/>
        <end position="101"/>
    </location>
</feature>
<feature type="transmembrane region" description="Helical" evidence="1">
    <location>
        <begin position="2"/>
        <end position="22"/>
    </location>
</feature>
<feature type="transmembrane region" description="Helical" evidence="1">
    <location>
        <begin position="32"/>
        <end position="52"/>
    </location>
</feature>
<feature type="transmembrane region" description="Helical" evidence="1">
    <location>
        <begin position="61"/>
        <end position="81"/>
    </location>
</feature>
<accession>A8SEF7</accession>
<keyword id="KW-0150">Chloroplast</keyword>
<keyword id="KW-0472">Membrane</keyword>
<keyword id="KW-0520">NAD</keyword>
<keyword id="KW-0521">NADP</keyword>
<keyword id="KW-0934">Plastid</keyword>
<keyword id="KW-0618">Plastoquinone</keyword>
<keyword id="KW-0874">Quinone</keyword>
<keyword id="KW-0793">Thylakoid</keyword>
<keyword id="KW-1278">Translocase</keyword>
<keyword id="KW-0812">Transmembrane</keyword>
<keyword id="KW-1133">Transmembrane helix</keyword>
<keyword id="KW-0813">Transport</keyword>
<organism>
    <name type="scientific">Ceratophyllum demersum</name>
    <name type="common">Rigid hornwort</name>
    <name type="synonym">Coontail</name>
    <dbReference type="NCBI Taxonomy" id="4428"/>
    <lineage>
        <taxon>Eukaryota</taxon>
        <taxon>Viridiplantae</taxon>
        <taxon>Streptophyta</taxon>
        <taxon>Embryophyta</taxon>
        <taxon>Tracheophyta</taxon>
        <taxon>Spermatophyta</taxon>
        <taxon>Magnoliopsida</taxon>
        <taxon>Ceratophyllales</taxon>
        <taxon>Ceratophyllaceae</taxon>
        <taxon>Ceratophyllum</taxon>
    </lineage>
</organism>
<reference key="1">
    <citation type="journal article" date="2007" name="Proc. Natl. Acad. Sci. U.S.A.">
        <title>Using plastid genome-scale data to resolve enigmatic relationships among basal angiosperms.</title>
        <authorList>
            <person name="Moore M.J."/>
            <person name="Bell C.D."/>
            <person name="Soltis P.S."/>
            <person name="Soltis D.E."/>
        </authorList>
    </citation>
    <scope>NUCLEOTIDE SEQUENCE [LARGE SCALE GENOMIC DNA]</scope>
</reference>
<name>NU4LC_CERDE</name>
<sequence>MMLEHELVLSAYLFSIGIYGLITSRNMVRALMCLELILNAVNMNLVTFSDLFDSRQLKGDIFSIFVIAIAAAEAAIGPAIVSSIYRNRRSTRINQSNLLNK</sequence>
<comment type="function">
    <text evidence="1">NDH shuttles electrons from NAD(P)H:plastoquinone, via FMN and iron-sulfur (Fe-S) centers, to quinones in the photosynthetic chain and possibly in a chloroplast respiratory chain. The immediate electron acceptor for the enzyme in this species is believed to be plastoquinone. Couples the redox reaction to proton translocation, and thus conserves the redox energy in a proton gradient.</text>
</comment>
<comment type="catalytic activity">
    <reaction evidence="1">
        <text>a plastoquinone + NADH + (n+1) H(+)(in) = a plastoquinol + NAD(+) + n H(+)(out)</text>
        <dbReference type="Rhea" id="RHEA:42608"/>
        <dbReference type="Rhea" id="RHEA-COMP:9561"/>
        <dbReference type="Rhea" id="RHEA-COMP:9562"/>
        <dbReference type="ChEBI" id="CHEBI:15378"/>
        <dbReference type="ChEBI" id="CHEBI:17757"/>
        <dbReference type="ChEBI" id="CHEBI:57540"/>
        <dbReference type="ChEBI" id="CHEBI:57945"/>
        <dbReference type="ChEBI" id="CHEBI:62192"/>
    </reaction>
</comment>
<comment type="catalytic activity">
    <reaction evidence="1">
        <text>a plastoquinone + NADPH + (n+1) H(+)(in) = a plastoquinol + NADP(+) + n H(+)(out)</text>
        <dbReference type="Rhea" id="RHEA:42612"/>
        <dbReference type="Rhea" id="RHEA-COMP:9561"/>
        <dbReference type="Rhea" id="RHEA-COMP:9562"/>
        <dbReference type="ChEBI" id="CHEBI:15378"/>
        <dbReference type="ChEBI" id="CHEBI:17757"/>
        <dbReference type="ChEBI" id="CHEBI:57783"/>
        <dbReference type="ChEBI" id="CHEBI:58349"/>
        <dbReference type="ChEBI" id="CHEBI:62192"/>
    </reaction>
</comment>
<comment type="subunit">
    <text evidence="1">NDH is composed of at least 16 different subunits, 5 of which are encoded in the nucleus.</text>
</comment>
<comment type="subcellular location">
    <subcellularLocation>
        <location evidence="1">Plastid</location>
        <location evidence="1">Chloroplast thylakoid membrane</location>
        <topology evidence="1">Multi-pass membrane protein</topology>
    </subcellularLocation>
</comment>
<comment type="similarity">
    <text evidence="1">Belongs to the complex I subunit 4L family.</text>
</comment>